<proteinExistence type="evidence at protein level"/>
<dbReference type="EMBL" id="AY304481">
    <property type="protein sequence ID" value="AAQ74773.1"/>
    <property type="molecule type" value="mRNA"/>
</dbReference>
<dbReference type="EMBL" id="AK002772">
    <property type="protein sequence ID" value="BAB22346.1"/>
    <property type="status" value="ALT_INIT"/>
    <property type="molecule type" value="mRNA"/>
</dbReference>
<dbReference type="EMBL" id="AK032164">
    <property type="protein sequence ID" value="BAC27734.1"/>
    <property type="status" value="ALT_INIT"/>
    <property type="molecule type" value="mRNA"/>
</dbReference>
<dbReference type="CCDS" id="CCDS48441.1"/>
<dbReference type="RefSeq" id="NP_079833.1">
    <property type="nucleotide sequence ID" value="NM_025557.1"/>
</dbReference>
<dbReference type="SMR" id="Q6W8Q3"/>
<dbReference type="FunCoup" id="Q6W8Q3">
    <property type="interactions" value="25"/>
</dbReference>
<dbReference type="STRING" id="10090.ENSMUSP00000106964"/>
<dbReference type="iPTMnet" id="Q6W8Q3"/>
<dbReference type="PhosphoSitePlus" id="Q6W8Q3"/>
<dbReference type="jPOST" id="Q6W8Q3"/>
<dbReference type="PaxDb" id="10090-ENSMUSP00000106964"/>
<dbReference type="PeptideAtlas" id="Q6W8Q3"/>
<dbReference type="ProteomicsDB" id="288110"/>
<dbReference type="Antibodypedia" id="74073">
    <property type="antibodies" value="10 antibodies from 8 providers"/>
</dbReference>
<dbReference type="Ensembl" id="ENSMUST00000111332.2">
    <property type="protein sequence ID" value="ENSMUSP00000106964.2"/>
    <property type="gene ID" value="ENSMUSG00000038370.7"/>
</dbReference>
<dbReference type="GeneID" id="66425"/>
<dbReference type="KEGG" id="mmu:66425"/>
<dbReference type="UCSC" id="uc009uzy.1">
    <property type="organism name" value="mouse"/>
</dbReference>
<dbReference type="AGR" id="MGI:1913675"/>
<dbReference type="CTD" id="654790"/>
<dbReference type="MGI" id="MGI:1913675">
    <property type="gene designation" value="Pcp4l1"/>
</dbReference>
<dbReference type="VEuPathDB" id="HostDB:ENSMUSG00000038370"/>
<dbReference type="eggNOG" id="ENOG502SDAE">
    <property type="taxonomic scope" value="Eukaryota"/>
</dbReference>
<dbReference type="GeneTree" id="ENSGT00530000064299"/>
<dbReference type="HOGENOM" id="CLU_202697_0_0_1"/>
<dbReference type="InParanoid" id="Q6W8Q3"/>
<dbReference type="OMA" id="MSERGHT"/>
<dbReference type="OrthoDB" id="9944346at2759"/>
<dbReference type="TreeFam" id="TF336068"/>
<dbReference type="BioGRID-ORCS" id="66425">
    <property type="hits" value="4 hits in 73 CRISPR screens"/>
</dbReference>
<dbReference type="ChiTaRS" id="Pcp4l1">
    <property type="organism name" value="mouse"/>
</dbReference>
<dbReference type="PRO" id="PR:Q6W8Q3"/>
<dbReference type="Proteomes" id="UP000000589">
    <property type="component" value="Chromosome 1"/>
</dbReference>
<dbReference type="RNAct" id="Q6W8Q3">
    <property type="molecule type" value="protein"/>
</dbReference>
<dbReference type="Bgee" id="ENSMUSG00000038370">
    <property type="expression patterns" value="Expressed in choroid plexus of fourth ventricle and 166 other cell types or tissues"/>
</dbReference>
<dbReference type="InterPro" id="IPR052142">
    <property type="entry name" value="Calmodulin_Regulator_PCP4-like"/>
</dbReference>
<dbReference type="PANTHER" id="PTHR15359">
    <property type="entry name" value="IG-LIKE DOMAIN-CONTAINING PROTEIN"/>
    <property type="match status" value="1"/>
</dbReference>
<dbReference type="PANTHER" id="PTHR15359:SF5">
    <property type="entry name" value="PURKINJE CELL PROTEIN 4-LIKE PROTEIN 1"/>
    <property type="match status" value="1"/>
</dbReference>
<dbReference type="PROSITE" id="PS50096">
    <property type="entry name" value="IQ"/>
    <property type="match status" value="1"/>
</dbReference>
<name>PC4L1_MOUSE</name>
<gene>
    <name type="primary">Pcp4l1</name>
</gene>
<evidence type="ECO:0000255" key="1">
    <source>
        <dbReference type="PROSITE-ProRule" id="PRU00116"/>
    </source>
</evidence>
<evidence type="ECO:0000256" key="2">
    <source>
        <dbReference type="SAM" id="MobiDB-lite"/>
    </source>
</evidence>
<evidence type="ECO:0000269" key="3">
    <source>
    </source>
</evidence>
<evidence type="ECO:0000305" key="4"/>
<evidence type="ECO:0007744" key="5">
    <source>
    </source>
</evidence>
<evidence type="ECO:0007744" key="6">
    <source>
    </source>
</evidence>
<accession>Q6W8Q3</accession>
<accession>Q9CW92</accession>
<organism>
    <name type="scientific">Mus musculus</name>
    <name type="common">Mouse</name>
    <dbReference type="NCBI Taxonomy" id="10090"/>
    <lineage>
        <taxon>Eukaryota</taxon>
        <taxon>Metazoa</taxon>
        <taxon>Chordata</taxon>
        <taxon>Craniata</taxon>
        <taxon>Vertebrata</taxon>
        <taxon>Euteleostomi</taxon>
        <taxon>Mammalia</taxon>
        <taxon>Eutheria</taxon>
        <taxon>Euarchontoglires</taxon>
        <taxon>Glires</taxon>
        <taxon>Rodentia</taxon>
        <taxon>Myomorpha</taxon>
        <taxon>Muroidea</taxon>
        <taxon>Muridae</taxon>
        <taxon>Murinae</taxon>
        <taxon>Mus</taxon>
        <taxon>Mus</taxon>
    </lineage>
</organism>
<sequence length="68" mass="7502">MSELNTKTPPAANQASDPEEKGKPGSIKKAEEEEEIDIDLTAPETEKAALAIQGKFRRFQKRKKDSSS</sequence>
<reference key="1">
    <citation type="journal article" date="2004" name="Gene Expr. Patterns">
        <title>Pcp4l1, a novel gene encoding a Pcp4-like polypeptide, is expressed in specific domains of the developing brain.</title>
        <authorList>
            <person name="Bulfone A."/>
            <person name="Caccioppoli C."/>
            <person name="Pardini C."/>
            <person name="Faedo A."/>
            <person name="Martinez S."/>
            <person name="Banfi S."/>
        </authorList>
    </citation>
    <scope>NUCLEOTIDE SEQUENCE [MRNA]</scope>
    <scope>TISSUE SPECIFICITY</scope>
    <scope>DEVELOPMENTAL STAGE</scope>
    <source>
        <strain>C57BL/6J</strain>
    </source>
</reference>
<reference key="2">
    <citation type="journal article" date="2005" name="Science">
        <title>The transcriptional landscape of the mammalian genome.</title>
        <authorList>
            <person name="Carninci P."/>
            <person name="Kasukawa T."/>
            <person name="Katayama S."/>
            <person name="Gough J."/>
            <person name="Frith M.C."/>
            <person name="Maeda N."/>
            <person name="Oyama R."/>
            <person name="Ravasi T."/>
            <person name="Lenhard B."/>
            <person name="Wells C."/>
            <person name="Kodzius R."/>
            <person name="Shimokawa K."/>
            <person name="Bajic V.B."/>
            <person name="Brenner S.E."/>
            <person name="Batalov S."/>
            <person name="Forrest A.R."/>
            <person name="Zavolan M."/>
            <person name="Davis M.J."/>
            <person name="Wilming L.G."/>
            <person name="Aidinis V."/>
            <person name="Allen J.E."/>
            <person name="Ambesi-Impiombato A."/>
            <person name="Apweiler R."/>
            <person name="Aturaliya R.N."/>
            <person name="Bailey T.L."/>
            <person name="Bansal M."/>
            <person name="Baxter L."/>
            <person name="Beisel K.W."/>
            <person name="Bersano T."/>
            <person name="Bono H."/>
            <person name="Chalk A.M."/>
            <person name="Chiu K.P."/>
            <person name="Choudhary V."/>
            <person name="Christoffels A."/>
            <person name="Clutterbuck D.R."/>
            <person name="Crowe M.L."/>
            <person name="Dalla E."/>
            <person name="Dalrymple B.P."/>
            <person name="de Bono B."/>
            <person name="Della Gatta G."/>
            <person name="di Bernardo D."/>
            <person name="Down T."/>
            <person name="Engstrom P."/>
            <person name="Fagiolini M."/>
            <person name="Faulkner G."/>
            <person name="Fletcher C.F."/>
            <person name="Fukushima T."/>
            <person name="Furuno M."/>
            <person name="Futaki S."/>
            <person name="Gariboldi M."/>
            <person name="Georgii-Hemming P."/>
            <person name="Gingeras T.R."/>
            <person name="Gojobori T."/>
            <person name="Green R.E."/>
            <person name="Gustincich S."/>
            <person name="Harbers M."/>
            <person name="Hayashi Y."/>
            <person name="Hensch T.K."/>
            <person name="Hirokawa N."/>
            <person name="Hill D."/>
            <person name="Huminiecki L."/>
            <person name="Iacono M."/>
            <person name="Ikeo K."/>
            <person name="Iwama A."/>
            <person name="Ishikawa T."/>
            <person name="Jakt M."/>
            <person name="Kanapin A."/>
            <person name="Katoh M."/>
            <person name="Kawasawa Y."/>
            <person name="Kelso J."/>
            <person name="Kitamura H."/>
            <person name="Kitano H."/>
            <person name="Kollias G."/>
            <person name="Krishnan S.P."/>
            <person name="Kruger A."/>
            <person name="Kummerfeld S.K."/>
            <person name="Kurochkin I.V."/>
            <person name="Lareau L.F."/>
            <person name="Lazarevic D."/>
            <person name="Lipovich L."/>
            <person name="Liu J."/>
            <person name="Liuni S."/>
            <person name="McWilliam S."/>
            <person name="Madan Babu M."/>
            <person name="Madera M."/>
            <person name="Marchionni L."/>
            <person name="Matsuda H."/>
            <person name="Matsuzawa S."/>
            <person name="Miki H."/>
            <person name="Mignone F."/>
            <person name="Miyake S."/>
            <person name="Morris K."/>
            <person name="Mottagui-Tabar S."/>
            <person name="Mulder N."/>
            <person name="Nakano N."/>
            <person name="Nakauchi H."/>
            <person name="Ng P."/>
            <person name="Nilsson R."/>
            <person name="Nishiguchi S."/>
            <person name="Nishikawa S."/>
            <person name="Nori F."/>
            <person name="Ohara O."/>
            <person name="Okazaki Y."/>
            <person name="Orlando V."/>
            <person name="Pang K.C."/>
            <person name="Pavan W.J."/>
            <person name="Pavesi G."/>
            <person name="Pesole G."/>
            <person name="Petrovsky N."/>
            <person name="Piazza S."/>
            <person name="Reed J."/>
            <person name="Reid J.F."/>
            <person name="Ring B.Z."/>
            <person name="Ringwald M."/>
            <person name="Rost B."/>
            <person name="Ruan Y."/>
            <person name="Salzberg S.L."/>
            <person name="Sandelin A."/>
            <person name="Schneider C."/>
            <person name="Schoenbach C."/>
            <person name="Sekiguchi K."/>
            <person name="Semple C.A."/>
            <person name="Seno S."/>
            <person name="Sessa L."/>
            <person name="Sheng Y."/>
            <person name="Shibata Y."/>
            <person name="Shimada H."/>
            <person name="Shimada K."/>
            <person name="Silva D."/>
            <person name="Sinclair B."/>
            <person name="Sperling S."/>
            <person name="Stupka E."/>
            <person name="Sugiura K."/>
            <person name="Sultana R."/>
            <person name="Takenaka Y."/>
            <person name="Taki K."/>
            <person name="Tammoja K."/>
            <person name="Tan S.L."/>
            <person name="Tang S."/>
            <person name="Taylor M.S."/>
            <person name="Tegner J."/>
            <person name="Teichmann S.A."/>
            <person name="Ueda H.R."/>
            <person name="van Nimwegen E."/>
            <person name="Verardo R."/>
            <person name="Wei C.L."/>
            <person name="Yagi K."/>
            <person name="Yamanishi H."/>
            <person name="Zabarovsky E."/>
            <person name="Zhu S."/>
            <person name="Zimmer A."/>
            <person name="Hide W."/>
            <person name="Bult C."/>
            <person name="Grimmond S.M."/>
            <person name="Teasdale R.D."/>
            <person name="Liu E.T."/>
            <person name="Brusic V."/>
            <person name="Quackenbush J."/>
            <person name="Wahlestedt C."/>
            <person name="Mattick J.S."/>
            <person name="Hume D.A."/>
            <person name="Kai C."/>
            <person name="Sasaki D."/>
            <person name="Tomaru Y."/>
            <person name="Fukuda S."/>
            <person name="Kanamori-Katayama M."/>
            <person name="Suzuki M."/>
            <person name="Aoki J."/>
            <person name="Arakawa T."/>
            <person name="Iida J."/>
            <person name="Imamura K."/>
            <person name="Itoh M."/>
            <person name="Kato T."/>
            <person name="Kawaji H."/>
            <person name="Kawagashira N."/>
            <person name="Kawashima T."/>
            <person name="Kojima M."/>
            <person name="Kondo S."/>
            <person name="Konno H."/>
            <person name="Nakano K."/>
            <person name="Ninomiya N."/>
            <person name="Nishio T."/>
            <person name="Okada M."/>
            <person name="Plessy C."/>
            <person name="Shibata K."/>
            <person name="Shiraki T."/>
            <person name="Suzuki S."/>
            <person name="Tagami M."/>
            <person name="Waki K."/>
            <person name="Watahiki A."/>
            <person name="Okamura-Oho Y."/>
            <person name="Suzuki H."/>
            <person name="Kawai J."/>
            <person name="Hayashizaki Y."/>
        </authorList>
    </citation>
    <scope>NUCLEOTIDE SEQUENCE [LARGE SCALE MRNA]</scope>
    <source>
        <strain>C57BL/6J</strain>
        <tissue>Kidney</tissue>
        <tissue>Olfactory bulb</tissue>
    </source>
</reference>
<reference key="3">
    <citation type="journal article" date="2007" name="Proc. Natl. Acad. Sci. U.S.A.">
        <title>Large-scale phosphorylation analysis of mouse liver.</title>
        <authorList>
            <person name="Villen J."/>
            <person name="Beausoleil S.A."/>
            <person name="Gerber S.A."/>
            <person name="Gygi S.P."/>
        </authorList>
    </citation>
    <scope>PHOSPHORYLATION [LARGE SCALE ANALYSIS] AT THR-8</scope>
    <scope>IDENTIFICATION BY MASS SPECTROMETRY [LARGE SCALE ANALYSIS]</scope>
    <source>
        <tissue>Liver</tissue>
    </source>
</reference>
<reference key="4">
    <citation type="journal article" date="2010" name="Cell">
        <title>A tissue-specific atlas of mouse protein phosphorylation and expression.</title>
        <authorList>
            <person name="Huttlin E.L."/>
            <person name="Jedrychowski M.P."/>
            <person name="Elias J.E."/>
            <person name="Goswami T."/>
            <person name="Rad R."/>
            <person name="Beausoleil S.A."/>
            <person name="Villen J."/>
            <person name="Haas W."/>
            <person name="Sowa M.E."/>
            <person name="Gygi S.P."/>
        </authorList>
    </citation>
    <scope>PHOSPHORYLATION [LARGE SCALE ANALYSIS] AT THR-8</scope>
    <scope>IDENTIFICATION BY MASS SPECTROMETRY [LARGE SCALE ANALYSIS]</scope>
    <source>
        <tissue>Brain</tissue>
        <tissue>Heart</tissue>
        <tissue>Lung</tissue>
        <tissue>Testis</tissue>
    </source>
</reference>
<keyword id="KW-0597">Phosphoprotein</keyword>
<keyword id="KW-1185">Reference proteome</keyword>
<protein>
    <recommendedName>
        <fullName>Purkinje cell protein 4-like protein 1</fullName>
        <shortName>PCP4-like protein 1</shortName>
    </recommendedName>
</protein>
<comment type="tissue specificity">
    <text evidence="3">Expressed in laminar and nuclear structures of the CNS.</text>
</comment>
<comment type="developmental stage">
    <text evidence="3">First detected at 9.5 dpc in the neural tube. Expressed at early stages of development in the isthmus and in metencephalic and mesencephalic roof plates. At later stages of development, it is expressed in structures corresponding to circumventricular organs which in adult control the production of the cerebrospinal fluid.</text>
</comment>
<comment type="similarity">
    <text evidence="4">Belongs to the PCP4 family.</text>
</comment>
<comment type="sequence caution" evidence="4">
    <conflict type="erroneous initiation">
        <sequence resource="EMBL-CDS" id="BAB22346"/>
    </conflict>
</comment>
<comment type="sequence caution" evidence="4">
    <conflict type="erroneous initiation">
        <sequence resource="EMBL-CDS" id="BAC27734"/>
    </conflict>
</comment>
<feature type="chain" id="PRO_0000331433" description="Purkinje cell protein 4-like protein 1">
    <location>
        <begin position="1"/>
        <end position="68"/>
    </location>
</feature>
<feature type="domain" description="IQ" evidence="1">
    <location>
        <begin position="45"/>
        <end position="68"/>
    </location>
</feature>
<feature type="region of interest" description="Disordered" evidence="2">
    <location>
        <begin position="1"/>
        <end position="42"/>
    </location>
</feature>
<feature type="compositionally biased region" description="Polar residues" evidence="2">
    <location>
        <begin position="1"/>
        <end position="16"/>
    </location>
</feature>
<feature type="compositionally biased region" description="Basic and acidic residues" evidence="2">
    <location>
        <begin position="18"/>
        <end position="31"/>
    </location>
</feature>
<feature type="modified residue" description="Phosphothreonine" evidence="5 6">
    <location>
        <position position="8"/>
    </location>
</feature>